<evidence type="ECO:0000255" key="1">
    <source>
        <dbReference type="HAMAP-Rule" id="MF_00921"/>
    </source>
</evidence>
<dbReference type="EC" id="2.7.11.32" evidence="1"/>
<dbReference type="EC" id="2.7.4.27" evidence="1"/>
<dbReference type="EMBL" id="CP000412">
    <property type="protein sequence ID" value="ABJ58707.1"/>
    <property type="molecule type" value="Genomic_DNA"/>
</dbReference>
<dbReference type="RefSeq" id="WP_011678364.1">
    <property type="nucleotide sequence ID" value="NC_008529.1"/>
</dbReference>
<dbReference type="SMR" id="Q04A15"/>
<dbReference type="KEGG" id="lbu:LBUL_1174"/>
<dbReference type="HOGENOM" id="CLU_046206_2_1_9"/>
<dbReference type="BioCyc" id="LDEL321956:LBUL_RS05490-MONOMER"/>
<dbReference type="GO" id="GO:0043531">
    <property type="term" value="F:ADP binding"/>
    <property type="evidence" value="ECO:0007669"/>
    <property type="project" value="UniProtKB-UniRule"/>
</dbReference>
<dbReference type="GO" id="GO:0005524">
    <property type="term" value="F:ATP binding"/>
    <property type="evidence" value="ECO:0007669"/>
    <property type="project" value="InterPro"/>
</dbReference>
<dbReference type="GO" id="GO:0016776">
    <property type="term" value="F:phosphotransferase activity, phosphate group as acceptor"/>
    <property type="evidence" value="ECO:0007669"/>
    <property type="project" value="UniProtKB-UniRule"/>
</dbReference>
<dbReference type="GO" id="GO:0004674">
    <property type="term" value="F:protein serine/threonine kinase activity"/>
    <property type="evidence" value="ECO:0007669"/>
    <property type="project" value="UniProtKB-UniRule"/>
</dbReference>
<dbReference type="HAMAP" id="MF_00921">
    <property type="entry name" value="PDRP"/>
    <property type="match status" value="1"/>
</dbReference>
<dbReference type="InterPro" id="IPR005177">
    <property type="entry name" value="Kinase-pyrophosphorylase"/>
</dbReference>
<dbReference type="InterPro" id="IPR027417">
    <property type="entry name" value="P-loop_NTPase"/>
</dbReference>
<dbReference type="InterPro" id="IPR026565">
    <property type="entry name" value="PPDK_reg"/>
</dbReference>
<dbReference type="NCBIfam" id="NF003742">
    <property type="entry name" value="PRK05339.1"/>
    <property type="match status" value="1"/>
</dbReference>
<dbReference type="PANTHER" id="PTHR31756">
    <property type="entry name" value="PYRUVATE, PHOSPHATE DIKINASE REGULATORY PROTEIN 1, CHLOROPLASTIC"/>
    <property type="match status" value="1"/>
</dbReference>
<dbReference type="PANTHER" id="PTHR31756:SF3">
    <property type="entry name" value="PYRUVATE, PHOSPHATE DIKINASE REGULATORY PROTEIN 1, CHLOROPLASTIC"/>
    <property type="match status" value="1"/>
</dbReference>
<dbReference type="Pfam" id="PF03618">
    <property type="entry name" value="Kinase-PPPase"/>
    <property type="match status" value="1"/>
</dbReference>
<dbReference type="SUPFAM" id="SSF52540">
    <property type="entry name" value="P-loop containing nucleoside triphosphate hydrolases"/>
    <property type="match status" value="1"/>
</dbReference>
<keyword id="KW-0418">Kinase</keyword>
<keyword id="KW-0547">Nucleotide-binding</keyword>
<keyword id="KW-0723">Serine/threonine-protein kinase</keyword>
<keyword id="KW-0808">Transferase</keyword>
<proteinExistence type="inferred from homology"/>
<protein>
    <recommendedName>
        <fullName evidence="1">Putative pyruvate, phosphate dikinase regulatory protein</fullName>
        <shortName evidence="1">PPDK regulatory protein</shortName>
        <ecNumber evidence="1">2.7.11.32</ecNumber>
        <ecNumber evidence="1">2.7.4.27</ecNumber>
    </recommendedName>
</protein>
<gene>
    <name type="ordered locus">LBUL_1174</name>
</gene>
<feature type="chain" id="PRO_0000316688" description="Putative pyruvate, phosphate dikinase regulatory protein">
    <location>
        <begin position="1"/>
        <end position="285"/>
    </location>
</feature>
<feature type="binding site" evidence="1">
    <location>
        <begin position="165"/>
        <end position="172"/>
    </location>
    <ligand>
        <name>ADP</name>
        <dbReference type="ChEBI" id="CHEBI:456216"/>
    </ligand>
</feature>
<reference key="1">
    <citation type="journal article" date="2006" name="Proc. Natl. Acad. Sci. U.S.A.">
        <title>Comparative genomics of the lactic acid bacteria.</title>
        <authorList>
            <person name="Makarova K.S."/>
            <person name="Slesarev A."/>
            <person name="Wolf Y.I."/>
            <person name="Sorokin A."/>
            <person name="Mirkin B."/>
            <person name="Koonin E.V."/>
            <person name="Pavlov A."/>
            <person name="Pavlova N."/>
            <person name="Karamychev V."/>
            <person name="Polouchine N."/>
            <person name="Shakhova V."/>
            <person name="Grigoriev I."/>
            <person name="Lou Y."/>
            <person name="Rohksar D."/>
            <person name="Lucas S."/>
            <person name="Huang K."/>
            <person name="Goodstein D.M."/>
            <person name="Hawkins T."/>
            <person name="Plengvidhya V."/>
            <person name="Welker D."/>
            <person name="Hughes J."/>
            <person name="Goh Y."/>
            <person name="Benson A."/>
            <person name="Baldwin K."/>
            <person name="Lee J.-H."/>
            <person name="Diaz-Muniz I."/>
            <person name="Dosti B."/>
            <person name="Smeianov V."/>
            <person name="Wechter W."/>
            <person name="Barabote R."/>
            <person name="Lorca G."/>
            <person name="Altermann E."/>
            <person name="Barrangou R."/>
            <person name="Ganesan B."/>
            <person name="Xie Y."/>
            <person name="Rawsthorne H."/>
            <person name="Tamir D."/>
            <person name="Parker C."/>
            <person name="Breidt F."/>
            <person name="Broadbent J.R."/>
            <person name="Hutkins R."/>
            <person name="O'Sullivan D."/>
            <person name="Steele J."/>
            <person name="Unlu G."/>
            <person name="Saier M.H. Jr."/>
            <person name="Klaenhammer T."/>
            <person name="Richardson P."/>
            <person name="Kozyavkin S."/>
            <person name="Weimer B.C."/>
            <person name="Mills D.A."/>
        </authorList>
    </citation>
    <scope>NUCLEOTIDE SEQUENCE [LARGE SCALE GENOMIC DNA]</scope>
    <source>
        <strain>ATCC BAA-365 / Lb-18</strain>
    </source>
</reference>
<comment type="function">
    <text evidence="1">Bifunctional serine/threonine kinase and phosphorylase involved in the regulation of the pyruvate, phosphate dikinase (PPDK) by catalyzing its phosphorylation/dephosphorylation.</text>
</comment>
<comment type="catalytic activity">
    <reaction evidence="1">
        <text>N(tele)-phospho-L-histidyl/L-threonyl-[pyruvate, phosphate dikinase] + ADP = N(tele)-phospho-L-histidyl/O-phospho-L-threonyl-[pyruvate, phosphate dikinase] + AMP + H(+)</text>
        <dbReference type="Rhea" id="RHEA:43692"/>
        <dbReference type="Rhea" id="RHEA-COMP:10650"/>
        <dbReference type="Rhea" id="RHEA-COMP:10651"/>
        <dbReference type="ChEBI" id="CHEBI:15378"/>
        <dbReference type="ChEBI" id="CHEBI:30013"/>
        <dbReference type="ChEBI" id="CHEBI:61977"/>
        <dbReference type="ChEBI" id="CHEBI:83586"/>
        <dbReference type="ChEBI" id="CHEBI:456215"/>
        <dbReference type="ChEBI" id="CHEBI:456216"/>
        <dbReference type="EC" id="2.7.11.32"/>
    </reaction>
</comment>
<comment type="catalytic activity">
    <reaction evidence="1">
        <text>N(tele)-phospho-L-histidyl/O-phospho-L-threonyl-[pyruvate, phosphate dikinase] + phosphate + H(+) = N(tele)-phospho-L-histidyl/L-threonyl-[pyruvate, phosphate dikinase] + diphosphate</text>
        <dbReference type="Rhea" id="RHEA:43696"/>
        <dbReference type="Rhea" id="RHEA-COMP:10650"/>
        <dbReference type="Rhea" id="RHEA-COMP:10651"/>
        <dbReference type="ChEBI" id="CHEBI:15378"/>
        <dbReference type="ChEBI" id="CHEBI:30013"/>
        <dbReference type="ChEBI" id="CHEBI:33019"/>
        <dbReference type="ChEBI" id="CHEBI:43474"/>
        <dbReference type="ChEBI" id="CHEBI:61977"/>
        <dbReference type="ChEBI" id="CHEBI:83586"/>
        <dbReference type="EC" id="2.7.4.27"/>
    </reaction>
</comment>
<comment type="similarity">
    <text evidence="1">Belongs to the pyruvate, phosphate/water dikinase regulatory protein family. PDRP subfamily.</text>
</comment>
<name>PDRP_LACDB</name>
<organism>
    <name type="scientific">Lactobacillus delbrueckii subsp. bulgaricus (strain ATCC BAA-365 / Lb-18)</name>
    <dbReference type="NCBI Taxonomy" id="321956"/>
    <lineage>
        <taxon>Bacteria</taxon>
        <taxon>Bacillati</taxon>
        <taxon>Bacillota</taxon>
        <taxon>Bacilli</taxon>
        <taxon>Lactobacillales</taxon>
        <taxon>Lactobacillaceae</taxon>
        <taxon>Lactobacillus</taxon>
    </lineage>
</organism>
<accession>Q04A15</accession>
<sequence length="285" mass="32128">MTENKAENKQTEKTEKMEVNIIIISDSAGETAFNNAQAAAVQFPDAEVNYRRYPFIVNEKKLAATLEEIEQYPNLVIVYSMLDEKLQLPIIKFAREHKARYIDILSPIIEAISQTTHMKPTGLVGANHQLTNKYFNRISAMEFAVMYDDGKDPRGFLEADVVLLGVSRTSKTPLSLLLANKGLKVANLPLVPQTHIPKEIYQIDPTKIIGLTTDPQVLNRIRRQRMISYGMDPDTAYSNMDSINAELDSAMALYKKLGCFVINVAERSIEETAALIMNHLSYEED</sequence>